<dbReference type="EMBL" id="BX571867">
    <property type="protein sequence ID" value="CAE14877.1"/>
    <property type="molecule type" value="Genomic_DNA"/>
</dbReference>
<dbReference type="RefSeq" id="WP_011146726.1">
    <property type="nucleotide sequence ID" value="NC_005126.1"/>
</dbReference>
<dbReference type="SMR" id="Q7N451"/>
<dbReference type="STRING" id="243265.plu2503"/>
<dbReference type="GeneID" id="48848768"/>
<dbReference type="KEGG" id="plu:plu2503"/>
<dbReference type="eggNOG" id="COG3012">
    <property type="taxonomic scope" value="Bacteria"/>
</dbReference>
<dbReference type="HOGENOM" id="CLU_099590_0_0_6"/>
<dbReference type="OrthoDB" id="21421at2"/>
<dbReference type="Proteomes" id="UP000002514">
    <property type="component" value="Chromosome"/>
</dbReference>
<dbReference type="Gene3D" id="3.10.450.50">
    <property type="match status" value="1"/>
</dbReference>
<dbReference type="HAMAP" id="MF_00612">
    <property type="entry name" value="UPF0225"/>
    <property type="match status" value="1"/>
</dbReference>
<dbReference type="InterPro" id="IPR032710">
    <property type="entry name" value="NTF2-like_dom_sf"/>
</dbReference>
<dbReference type="InterPro" id="IPR004027">
    <property type="entry name" value="SEC_C_motif"/>
</dbReference>
<dbReference type="InterPro" id="IPR023006">
    <property type="entry name" value="UPF0225"/>
</dbReference>
<dbReference type="InterPro" id="IPR048469">
    <property type="entry name" value="YchJ-like_M"/>
</dbReference>
<dbReference type="NCBIfam" id="NF002449">
    <property type="entry name" value="PRK01617.1"/>
    <property type="match status" value="1"/>
</dbReference>
<dbReference type="NCBIfam" id="NF002486">
    <property type="entry name" value="PRK01752.1"/>
    <property type="match status" value="1"/>
</dbReference>
<dbReference type="PANTHER" id="PTHR33747:SF1">
    <property type="entry name" value="ADENYLATE CYCLASE-ASSOCIATED CAP C-TERMINAL DOMAIN-CONTAINING PROTEIN"/>
    <property type="match status" value="1"/>
</dbReference>
<dbReference type="PANTHER" id="PTHR33747">
    <property type="entry name" value="UPF0225 PROTEIN SCO1677"/>
    <property type="match status" value="1"/>
</dbReference>
<dbReference type="Pfam" id="PF02810">
    <property type="entry name" value="SEC-C"/>
    <property type="match status" value="2"/>
</dbReference>
<dbReference type="Pfam" id="PF17775">
    <property type="entry name" value="YchJ_M-like"/>
    <property type="match status" value="1"/>
</dbReference>
<dbReference type="SUPFAM" id="SSF54427">
    <property type="entry name" value="NTF2-like"/>
    <property type="match status" value="1"/>
</dbReference>
<dbReference type="SUPFAM" id="SSF103642">
    <property type="entry name" value="Sec-C motif"/>
    <property type="match status" value="1"/>
</dbReference>
<evidence type="ECO:0000255" key="1">
    <source>
        <dbReference type="HAMAP-Rule" id="MF_00612"/>
    </source>
</evidence>
<comment type="similarity">
    <text evidence="1">Belongs to the UPF0225 family.</text>
</comment>
<name>Y2503_PHOLL</name>
<keyword id="KW-1185">Reference proteome</keyword>
<protein>
    <recommendedName>
        <fullName evidence="1">UPF0225 protein plu2503</fullName>
    </recommendedName>
</protein>
<gene>
    <name type="ordered locus">plu2503</name>
</gene>
<feature type="chain" id="PRO_0000071808" description="UPF0225 protein plu2503">
    <location>
        <begin position="1"/>
        <end position="159"/>
    </location>
</feature>
<organism>
    <name type="scientific">Photorhabdus laumondii subsp. laumondii (strain DSM 15139 / CIP 105565 / TT01)</name>
    <name type="common">Photorhabdus luminescens subsp. laumondii</name>
    <dbReference type="NCBI Taxonomy" id="243265"/>
    <lineage>
        <taxon>Bacteria</taxon>
        <taxon>Pseudomonadati</taxon>
        <taxon>Pseudomonadota</taxon>
        <taxon>Gammaproteobacteria</taxon>
        <taxon>Enterobacterales</taxon>
        <taxon>Morganellaceae</taxon>
        <taxon>Photorhabdus</taxon>
    </lineage>
</organism>
<proteinExistence type="inferred from homology"/>
<reference key="1">
    <citation type="journal article" date="2003" name="Nat. Biotechnol.">
        <title>The genome sequence of the entomopathogenic bacterium Photorhabdus luminescens.</title>
        <authorList>
            <person name="Duchaud E."/>
            <person name="Rusniok C."/>
            <person name="Frangeul L."/>
            <person name="Buchrieser C."/>
            <person name="Givaudan A."/>
            <person name="Taourit S."/>
            <person name="Bocs S."/>
            <person name="Boursaux-Eude C."/>
            <person name="Chandler M."/>
            <person name="Charles J.-F."/>
            <person name="Dassa E."/>
            <person name="Derose R."/>
            <person name="Derzelle S."/>
            <person name="Freyssinet G."/>
            <person name="Gaudriault S."/>
            <person name="Medigue C."/>
            <person name="Lanois A."/>
            <person name="Powell K."/>
            <person name="Siguier P."/>
            <person name="Vincent R."/>
            <person name="Wingate V."/>
            <person name="Zouine M."/>
            <person name="Glaser P."/>
            <person name="Boemare N."/>
            <person name="Danchin A."/>
            <person name="Kunst F."/>
        </authorList>
    </citation>
    <scope>NUCLEOTIDE SEQUENCE [LARGE SCALE GENOMIC DNA]</scope>
    <source>
        <strain>DSM 15139 / CIP 105565 / TT01</strain>
    </source>
</reference>
<sequence length="159" mass="18275">MTELCPCGSGIDFADCCSPYLQNIKFAQTAESLMRSRYSAYVKHNADYLITSWHPDCQAEKWRLDIEQSFIVTQWLGLNVITTEKGENDNEAYVEFSACFLDQKSQDKQLIHERSRFLRIDQHWYYIDGVKPIDGIKPQIGRNSPCPCGSGKKYKKCCG</sequence>
<accession>Q7N451</accession>